<keyword id="KW-0002">3D-structure</keyword>
<keyword id="KW-0024">Alternative initiation</keyword>
<keyword id="KW-0028">Amino-acid biosynthesis</keyword>
<keyword id="KW-0067">ATP-binding</keyword>
<keyword id="KW-0220">Diaminopimelate biosynthesis</keyword>
<keyword id="KW-0418">Kinase</keyword>
<keyword id="KW-0457">Lysine biosynthesis</keyword>
<keyword id="KW-0547">Nucleotide-binding</keyword>
<keyword id="KW-1185">Reference proteome</keyword>
<keyword id="KW-0677">Repeat</keyword>
<keyword id="KW-0808">Transferase</keyword>
<sequence>MALVVQKYGGSSLESAERIRNVAERIVATKKAGNDVVVVCSAMGDTTDELLELAAAVNPVPPAREMDMLLTAGERISNALVAMAIESLGAEAQSFTGSQAGVLTTERHGNARIVDVTPGRVREALDEGKICIVAGFQGVNKETRDVTTLGRGGSDTTAVALAAALNADVCEIYSDVDGVYTADPRIVPNAQKLEKLSFEEMLELAAVGSKILVLRSVEYARAFNVPLRVRSSYSNDPGTLIAGSMEDIPVEEAVLTGVATDKSEAKVTVLGISDKPGEAAKVFRALADAEINIDMVLQNVSSVEDGTTDITFTCPRSDGRRAMEILKKLQVQGNWTNVLYDDQVGKVSLVGAGMKSHPGVTAEFMEALRDVNVNIELISTSEIRISVLIREDDLDAAARALHEQFQLGGEDEAVVYAGTGR</sequence>
<comment type="function">
    <text evidence="3 4">Catalyzes the phosphorylation of the beta-carboxyl group of aspartic acid with ATP to yield 4-phospho-L-aspartate, which is involved in the branched biosynthetic pathway leading to the biosynthesis of amino acids lysine, threonine, isoleucine and methionine.</text>
</comment>
<comment type="catalytic activity">
    <reaction>
        <text>L-aspartate + ATP = 4-phospho-L-aspartate + ADP</text>
        <dbReference type="Rhea" id="RHEA:23776"/>
        <dbReference type="ChEBI" id="CHEBI:29991"/>
        <dbReference type="ChEBI" id="CHEBI:30616"/>
        <dbReference type="ChEBI" id="CHEBI:57535"/>
        <dbReference type="ChEBI" id="CHEBI:456216"/>
        <dbReference type="EC" id="2.7.2.4"/>
    </reaction>
</comment>
<comment type="activity regulation">
    <text evidence="3 4">Feedback inhibition by lysine and threonine, but he enzyme is moderately inhibited by lysine alone, and threonine alone has no effect.</text>
</comment>
<comment type="pathway">
    <text>Amino-acid biosynthesis; L-lysine biosynthesis via DAP pathway; (S)-tetrahydrodipicolinate from L-aspartate: step 1/4.</text>
</comment>
<comment type="pathway">
    <text>Amino-acid biosynthesis; L-methionine biosynthesis via de novo pathway; L-homoserine from L-aspartate: step 1/3.</text>
</comment>
<comment type="pathway">
    <text>Amino-acid biosynthesis; L-threonine biosynthesis; L-threonine from L-aspartate: step 1/5.</text>
</comment>
<comment type="subunit">
    <text evidence="3 4">Tetramer consisting of 2 isoforms Alpha (catalytic and regulation) and of a homodimer of 2 isoforms Beta (regulation). The dimerization of the beta isoforms is stabilized by the bonding of threonine.</text>
</comment>
<comment type="alternative products">
    <event type="alternative initiation"/>
    <isoform>
        <id>P26512-1</id>
        <name>Alpha</name>
        <name>Aspartokinase subunit alpha</name>
        <sequence type="displayed"/>
    </isoform>
    <isoform>
        <id>P26512-2</id>
        <name>Beta</name>
        <name>Aspartokinase subunit beta</name>
        <sequence type="described" ref="VSP_018659 VSP_018660"/>
    </isoform>
</comment>
<comment type="similarity">
    <text evidence="5">Belongs to the aspartokinase family.</text>
</comment>
<proteinExistence type="evidence at protein level"/>
<gene>
    <name type="primary">lysC</name>
    <name type="ordered locus">Cgl0251</name>
    <name type="ordered locus">cg0306</name>
</gene>
<dbReference type="EC" id="2.7.2.4"/>
<dbReference type="EMBL" id="X57226">
    <property type="protein sequence ID" value="CAA40502.1"/>
    <property type="molecule type" value="Genomic_DNA"/>
</dbReference>
<dbReference type="EMBL" id="X57226">
    <property type="protein sequence ID" value="CAA40503.1"/>
    <property type="molecule type" value="Genomic_DNA"/>
</dbReference>
<dbReference type="EMBL" id="BA000036">
    <property type="protein sequence ID" value="BAB97644.1"/>
    <property type="molecule type" value="Genomic_DNA"/>
</dbReference>
<dbReference type="EMBL" id="BX927148">
    <property type="protein sequence ID" value="CAF18822.1"/>
    <property type="molecule type" value="Genomic_DNA"/>
</dbReference>
<dbReference type="EMBL" id="X70959">
    <property type="protein sequence ID" value="CAA50296.1"/>
    <property type="molecule type" value="Genomic_DNA"/>
</dbReference>
<dbReference type="PIR" id="I40723">
    <property type="entry name" value="I40723"/>
</dbReference>
<dbReference type="PIR" id="S15276">
    <property type="entry name" value="S15276"/>
</dbReference>
<dbReference type="RefSeq" id="NP_599504.1">
    <property type="nucleotide sequence ID" value="NC_003450.3"/>
</dbReference>
<dbReference type="RefSeq" id="WP_003855724.1">
    <property type="nucleotide sequence ID" value="NC_006958.1"/>
</dbReference>
<dbReference type="PDB" id="2DTJ">
    <property type="method" value="X-ray"/>
    <property type="resolution" value="1.58 A"/>
    <property type="chains" value="A/B=250-421"/>
</dbReference>
<dbReference type="PDB" id="3AAW">
    <property type="method" value="X-ray"/>
    <property type="resolution" value="2.50 A"/>
    <property type="chains" value="A/C=1-421"/>
</dbReference>
<dbReference type="PDB" id="3AB2">
    <property type="method" value="X-ray"/>
    <property type="resolution" value="2.59 A"/>
    <property type="chains" value="A/C/E/G/I/K/M/O=1-421, B/D/F/H/J/L/N/P=251-421"/>
</dbReference>
<dbReference type="PDB" id="3AB4">
    <property type="method" value="X-ray"/>
    <property type="resolution" value="2.47 A"/>
    <property type="chains" value="A/C/E/G/I/K/M/O=1-421, B/D/F/H/J/L/N/P=251-421"/>
</dbReference>
<dbReference type="PDBsum" id="2DTJ"/>
<dbReference type="PDBsum" id="3AAW"/>
<dbReference type="PDBsum" id="3AB2"/>
<dbReference type="PDBsum" id="3AB4"/>
<dbReference type="SMR" id="P26512"/>
<dbReference type="STRING" id="196627.cg0306"/>
<dbReference type="KEGG" id="cgb:cg0306"/>
<dbReference type="KEGG" id="cgl:Cgl0251"/>
<dbReference type="PATRIC" id="fig|196627.13.peg.255"/>
<dbReference type="eggNOG" id="COG0527">
    <property type="taxonomic scope" value="Bacteria"/>
</dbReference>
<dbReference type="HOGENOM" id="CLU_009116_3_2_11"/>
<dbReference type="OrthoDB" id="9799110at2"/>
<dbReference type="BioCyc" id="CORYNE:G18NG-9806-MONOMER"/>
<dbReference type="BioCyc" id="MetaCyc:MONOMER-6461"/>
<dbReference type="BioCyc" id="MetaCyc:MONOMER-6462"/>
<dbReference type="BRENDA" id="2.7.2.4">
    <property type="organism ID" value="960"/>
</dbReference>
<dbReference type="UniPathway" id="UPA00034">
    <property type="reaction ID" value="UER00015"/>
</dbReference>
<dbReference type="UniPathway" id="UPA00050">
    <property type="reaction ID" value="UER00461"/>
</dbReference>
<dbReference type="UniPathway" id="UPA00051">
    <property type="reaction ID" value="UER00462"/>
</dbReference>
<dbReference type="EvolutionaryTrace" id="P26512"/>
<dbReference type="Proteomes" id="UP000000582">
    <property type="component" value="Chromosome"/>
</dbReference>
<dbReference type="Proteomes" id="UP000001009">
    <property type="component" value="Chromosome"/>
</dbReference>
<dbReference type="GO" id="GO:0005829">
    <property type="term" value="C:cytosol"/>
    <property type="evidence" value="ECO:0007669"/>
    <property type="project" value="TreeGrafter"/>
</dbReference>
<dbReference type="GO" id="GO:0004072">
    <property type="term" value="F:aspartate kinase activity"/>
    <property type="evidence" value="ECO:0007669"/>
    <property type="project" value="UniProtKB-EC"/>
</dbReference>
<dbReference type="GO" id="GO:0005524">
    <property type="term" value="F:ATP binding"/>
    <property type="evidence" value="ECO:0007669"/>
    <property type="project" value="UniProtKB-KW"/>
</dbReference>
<dbReference type="GO" id="GO:0019877">
    <property type="term" value="P:diaminopimelate biosynthetic process"/>
    <property type="evidence" value="ECO:0007669"/>
    <property type="project" value="UniProtKB-KW"/>
</dbReference>
<dbReference type="GO" id="GO:0009090">
    <property type="term" value="P:homoserine biosynthetic process"/>
    <property type="evidence" value="ECO:0007669"/>
    <property type="project" value="TreeGrafter"/>
</dbReference>
<dbReference type="GO" id="GO:0009089">
    <property type="term" value="P:lysine biosynthetic process via diaminopimelate"/>
    <property type="evidence" value="ECO:0007669"/>
    <property type="project" value="UniProtKB-UniPathway"/>
</dbReference>
<dbReference type="GO" id="GO:0009088">
    <property type="term" value="P:threonine biosynthetic process"/>
    <property type="evidence" value="ECO:0007669"/>
    <property type="project" value="UniProtKB-UniPathway"/>
</dbReference>
<dbReference type="CDD" id="cd04261">
    <property type="entry name" value="AAK_AKii-LysC-BS"/>
    <property type="match status" value="1"/>
</dbReference>
<dbReference type="CDD" id="cd04923">
    <property type="entry name" value="ACT_AK-LysC-DapG-like_2"/>
    <property type="match status" value="1"/>
</dbReference>
<dbReference type="CDD" id="cd04913">
    <property type="entry name" value="ACT_AKii-LysC-BS-like_1"/>
    <property type="match status" value="1"/>
</dbReference>
<dbReference type="FunFam" id="3.40.1160.10:FF:000002">
    <property type="entry name" value="Aspartokinase"/>
    <property type="match status" value="1"/>
</dbReference>
<dbReference type="Gene3D" id="3.30.70.260">
    <property type="match status" value="2"/>
</dbReference>
<dbReference type="Gene3D" id="3.40.1160.10">
    <property type="entry name" value="Acetylglutamate kinase-like"/>
    <property type="match status" value="1"/>
</dbReference>
<dbReference type="InterPro" id="IPR036393">
    <property type="entry name" value="AceGlu_kinase-like_sf"/>
</dbReference>
<dbReference type="InterPro" id="IPR045865">
    <property type="entry name" value="ACT-like_dom_sf"/>
</dbReference>
<dbReference type="InterPro" id="IPR054352">
    <property type="entry name" value="ACT_Aspartokinase"/>
</dbReference>
<dbReference type="InterPro" id="IPR002912">
    <property type="entry name" value="ACT_dom"/>
</dbReference>
<dbReference type="InterPro" id="IPR041740">
    <property type="entry name" value="AKii-LysC-BS"/>
</dbReference>
<dbReference type="InterPro" id="IPR001048">
    <property type="entry name" value="Asp/Glu/Uridylate_kinase"/>
</dbReference>
<dbReference type="InterPro" id="IPR005260">
    <property type="entry name" value="Asp_kin_monofn"/>
</dbReference>
<dbReference type="InterPro" id="IPR001341">
    <property type="entry name" value="Asp_kinase"/>
</dbReference>
<dbReference type="InterPro" id="IPR018042">
    <property type="entry name" value="Aspartate_kinase_CS"/>
</dbReference>
<dbReference type="NCBIfam" id="TIGR00656">
    <property type="entry name" value="asp_kin_monofn"/>
    <property type="match status" value="1"/>
</dbReference>
<dbReference type="NCBIfam" id="TIGR00657">
    <property type="entry name" value="asp_kinases"/>
    <property type="match status" value="1"/>
</dbReference>
<dbReference type="NCBIfam" id="NF005153">
    <property type="entry name" value="PRK06635.1-1"/>
    <property type="match status" value="1"/>
</dbReference>
<dbReference type="NCBIfam" id="NF005154">
    <property type="entry name" value="PRK06635.1-2"/>
    <property type="match status" value="1"/>
</dbReference>
<dbReference type="NCBIfam" id="NF005155">
    <property type="entry name" value="PRK06635.1-4"/>
    <property type="match status" value="1"/>
</dbReference>
<dbReference type="PANTHER" id="PTHR21499">
    <property type="entry name" value="ASPARTATE KINASE"/>
    <property type="match status" value="1"/>
</dbReference>
<dbReference type="PANTHER" id="PTHR21499:SF3">
    <property type="entry name" value="ASPARTOKINASE"/>
    <property type="match status" value="1"/>
</dbReference>
<dbReference type="Pfam" id="PF00696">
    <property type="entry name" value="AA_kinase"/>
    <property type="match status" value="1"/>
</dbReference>
<dbReference type="Pfam" id="PF22468">
    <property type="entry name" value="ACT_9"/>
    <property type="match status" value="2"/>
</dbReference>
<dbReference type="PIRSF" id="PIRSF000726">
    <property type="entry name" value="Asp_kin"/>
    <property type="match status" value="1"/>
</dbReference>
<dbReference type="SUPFAM" id="SSF55021">
    <property type="entry name" value="ACT-like"/>
    <property type="match status" value="2"/>
</dbReference>
<dbReference type="SUPFAM" id="SSF53633">
    <property type="entry name" value="Carbamate kinase-like"/>
    <property type="match status" value="1"/>
</dbReference>
<dbReference type="PROSITE" id="PS51671">
    <property type="entry name" value="ACT"/>
    <property type="match status" value="2"/>
</dbReference>
<dbReference type="PROSITE" id="PS00324">
    <property type="entry name" value="ASPARTOKINASE"/>
    <property type="match status" value="1"/>
</dbReference>
<evidence type="ECO:0000250" key="1"/>
<evidence type="ECO:0000255" key="2">
    <source>
        <dbReference type="PROSITE-ProRule" id="PRU01007"/>
    </source>
</evidence>
<evidence type="ECO:0000269" key="3">
    <source>
    </source>
</evidence>
<evidence type="ECO:0000269" key="4">
    <source>
    </source>
</evidence>
<evidence type="ECO:0000305" key="5"/>
<evidence type="ECO:0007829" key="6">
    <source>
        <dbReference type="PDB" id="2DTJ"/>
    </source>
</evidence>
<evidence type="ECO:0007829" key="7">
    <source>
        <dbReference type="PDB" id="3AAW"/>
    </source>
</evidence>
<evidence type="ECO:0007829" key="8">
    <source>
        <dbReference type="PDB" id="3AB4"/>
    </source>
</evidence>
<reference key="1">
    <citation type="journal article" date="1991" name="Mol. Microbiol.">
        <title>Genetic and biochemical analysis of the aspartokinase from Corynebacterium glutamicum.</title>
        <authorList>
            <person name="Kalinowski J."/>
            <person name="Cremer J."/>
            <person name="Bachmann B."/>
            <person name="Eggeling L."/>
            <person name="Sahm H."/>
            <person name="Puehler A."/>
        </authorList>
    </citation>
    <scope>NUCLEOTIDE SEQUENCE [GENOMIC DNA]</scope>
    <source>
        <strain>ATCC 13032 / DSM 20300 / JCM 1318 / BCRC 11384 / CCUG 27702 / LMG 3730 / NBRC 12168 / NCIMB 10025 / NRRL B-2784 / 534</strain>
    </source>
</reference>
<reference key="2">
    <citation type="journal article" date="2003" name="Appl. Microbiol. Biotechnol.">
        <title>The Corynebacterium glutamicum genome: features and impacts on biotechnological processes.</title>
        <authorList>
            <person name="Ikeda M."/>
            <person name="Nakagawa S."/>
        </authorList>
    </citation>
    <scope>NUCLEOTIDE SEQUENCE [LARGE SCALE GENOMIC DNA]</scope>
    <source>
        <strain>ATCC 13032 / DSM 20300 / JCM 1318 / BCRC 11384 / CCUG 27702 / LMG 3730 / NBRC 12168 / NCIMB 10025 / NRRL B-2784 / 534</strain>
    </source>
</reference>
<reference key="3">
    <citation type="journal article" date="2003" name="J. Biotechnol.">
        <title>The complete Corynebacterium glutamicum ATCC 13032 genome sequence and its impact on the production of L-aspartate-derived amino acids and vitamins.</title>
        <authorList>
            <person name="Kalinowski J."/>
            <person name="Bathe B."/>
            <person name="Bartels D."/>
            <person name="Bischoff N."/>
            <person name="Bott M."/>
            <person name="Burkovski A."/>
            <person name="Dusch N."/>
            <person name="Eggeling L."/>
            <person name="Eikmanns B.J."/>
            <person name="Gaigalat L."/>
            <person name="Goesmann A."/>
            <person name="Hartmann M."/>
            <person name="Huthmacher K."/>
            <person name="Kraemer R."/>
            <person name="Linke B."/>
            <person name="McHardy A.C."/>
            <person name="Meyer F."/>
            <person name="Moeckel B."/>
            <person name="Pfefferle W."/>
            <person name="Puehler A."/>
            <person name="Rey D.A."/>
            <person name="Rueckert C."/>
            <person name="Rupp O."/>
            <person name="Sahm H."/>
            <person name="Wendisch V.F."/>
            <person name="Wiegraebe I."/>
            <person name="Tauch A."/>
        </authorList>
    </citation>
    <scope>NUCLEOTIDE SEQUENCE [LARGE SCALE GENOMIC DNA]</scope>
    <source>
        <strain>ATCC 13032 / DSM 20300 / JCM 1318 / BCRC 11384 / CCUG 27702 / LMG 3730 / NBRC 12168 / NCIMB 10025 / NRRL B-2784 / 534</strain>
    </source>
</reference>
<reference key="4">
    <citation type="journal article" date="1994" name="Appl. Environ. Microbiol.">
        <title>Leucine synthesis in Corynebacterium glutamicum: enzyme activities, structure of leuA, and effect of leuA inactivation on lysine synthesis.</title>
        <authorList>
            <person name="Patek M."/>
            <person name="Krumbach K."/>
            <person name="Eggeling L."/>
            <person name="Sahm H."/>
        </authorList>
    </citation>
    <scope>NUCLEOTIDE SEQUENCE [GENOMIC DNA] OF 1-51</scope>
    <source>
        <strain>ATCC 13032 / DSM 20300 / JCM 1318 / BCRC 11384 / CCUG 27702 / LMG 3730 / NBRC 12168 / NCIMB 10025 / NRRL B-2784 / 534</strain>
    </source>
</reference>
<reference key="5">
    <citation type="journal article" date="1990" name="Mol. Gen. Genet.">
        <title>Aspartokinase genes lysC alpha and lysC beta overlap and are adjacent to the aspartate beta-semialdehyde dehydrogenase gene asd in Corynebacterium glutamicum.</title>
        <authorList>
            <person name="Kalinowski J."/>
            <person name="Bachmann B."/>
            <person name="Thierbach G."/>
            <person name="Puehler A."/>
        </authorList>
    </citation>
    <scope>NUCLEOTIDE SEQUENCE [GENOMIC DNA] OF 158-421</scope>
    <source>
        <strain>ATCC 13032 / DSM 20300 / JCM 1318 / BCRC 11384 / CCUG 27702 / LMG 3730 / NBRC 12168 / NCIMB 10025 / NRRL B-2784 / 534</strain>
    </source>
</reference>
<reference key="6">
    <citation type="journal article" date="2007" name="J. Mol. Biol.">
        <title>Structural Insight into concerted inhibition of alpha 2 beta 2-type aspartate kinase from Corynebacterium glutamicum.</title>
        <authorList>
            <person name="Yoshida A."/>
            <person name="Tomita T."/>
            <person name="Kurihara T."/>
            <person name="Fushinobu S."/>
            <person name="Kuzuyama T."/>
            <person name="Nishiyama M."/>
        </authorList>
    </citation>
    <scope>X-RAY CRYSTALLOGRAPHY (1.58 ANGSTROMS) OF 251-421 IN COMPLEX WITH SUBSTRATE ANALOGS</scope>
    <scope>MUTAGENESIS OF GLY-277; ALA-279; GLN-298; SER-301; VAL-360; THR-361; GLU-363 AND PHE-364</scope>
    <scope>ACTIVITY REGULATION</scope>
    <scope>SUBUNIT</scope>
    <scope>FUNCTION</scope>
</reference>
<reference key="7">
    <citation type="journal article" date="2010" name="J. Biol. Chem.">
        <title>Mechanism of concerted inhibition of alpha2beta2-type hetero-oligomeric aspartate kinase from Corynebacterium glutamicum.</title>
        <authorList>
            <person name="Yoshida A."/>
            <person name="Tomita T."/>
            <person name="Kuzuyama T."/>
            <person name="Nishiyama M."/>
        </authorList>
    </citation>
    <scope>X-RAY CRYSTALLOGRAPHY (2.5 ANGSTROMS) OF 1-421 AND 251-421 AND MUTANT PHE-301 IN COMPLEX WITH SUBSTRATE ANALOGS</scope>
    <scope>FUNCTION</scope>
    <scope>MUTAGENESIS OF SER-301</scope>
    <scope>ACTIVITY REGULATION</scope>
    <scope>SUBUNIT</scope>
</reference>
<protein>
    <recommendedName>
        <fullName>Aspartokinase</fullName>
        <ecNumber>2.7.2.4</ecNumber>
    </recommendedName>
    <alternativeName>
        <fullName>Aspartate kinase</fullName>
    </alternativeName>
</protein>
<accession>P26512</accession>
<accession>Q59286</accession>
<name>AK_CORGL</name>
<feature type="chain" id="PRO_0000002379" description="Aspartokinase">
    <location>
        <begin position="1"/>
        <end position="421"/>
    </location>
</feature>
<feature type="domain" description="ACT 1" evidence="2">
    <location>
        <begin position="267"/>
        <end position="343"/>
    </location>
</feature>
<feature type="domain" description="ACT 2" evidence="2">
    <location>
        <begin position="349"/>
        <end position="421"/>
    </location>
</feature>
<feature type="binding site" evidence="1">
    <location>
        <begin position="7"/>
        <end position="10"/>
    </location>
    <ligand>
        <name>ATP</name>
        <dbReference type="ChEBI" id="CHEBI:30616"/>
    </ligand>
</feature>
<feature type="binding site" evidence="1">
    <location>
        <begin position="25"/>
        <end position="30"/>
    </location>
    <ligand>
        <name>substrate</name>
    </ligand>
</feature>
<feature type="binding site" evidence="1">
    <location>
        <position position="41"/>
    </location>
    <ligand>
        <name>ATP</name>
        <dbReference type="ChEBI" id="CHEBI:30616"/>
    </ligand>
</feature>
<feature type="binding site">
    <location>
        <begin position="45"/>
        <end position="49"/>
    </location>
    <ligand>
        <name>substrate</name>
    </ligand>
</feature>
<feature type="binding site" evidence="1">
    <location>
        <position position="74"/>
    </location>
    <ligand>
        <name>substrate</name>
    </ligand>
</feature>
<feature type="binding site" evidence="1">
    <location>
        <begin position="125"/>
        <end position="126"/>
    </location>
    <ligand>
        <name>substrate</name>
    </ligand>
</feature>
<feature type="binding site" evidence="1">
    <location>
        <begin position="151"/>
        <end position="154"/>
    </location>
    <ligand>
        <name>substrate</name>
    </ligand>
</feature>
<feature type="binding site">
    <location>
        <position position="154"/>
    </location>
    <ligand>
        <name>substrate</name>
    </ligand>
</feature>
<feature type="binding site" evidence="1">
    <location>
        <begin position="174"/>
        <end position="175"/>
    </location>
    <ligand>
        <name>ATP</name>
        <dbReference type="ChEBI" id="CHEBI:30616"/>
    </ligand>
</feature>
<feature type="binding site" evidence="1">
    <location>
        <begin position="180"/>
        <end position="185"/>
    </location>
    <ligand>
        <name>ATP</name>
        <dbReference type="ChEBI" id="CHEBI:30616"/>
    </ligand>
</feature>
<feature type="binding site" evidence="1">
    <location>
        <position position="210"/>
    </location>
    <ligand>
        <name>ATP</name>
        <dbReference type="ChEBI" id="CHEBI:30616"/>
    </ligand>
</feature>
<feature type="binding site">
    <location>
        <begin position="274"/>
        <end position="279"/>
    </location>
    <ligand>
        <name>substrate</name>
    </ligand>
</feature>
<feature type="binding site" evidence="1">
    <location>
        <position position="274"/>
    </location>
    <ligand>
        <name>substrate</name>
    </ligand>
</feature>
<feature type="binding site">
    <location>
        <begin position="292"/>
        <end position="294"/>
    </location>
    <ligand>
        <name>substrate</name>
    </ligand>
</feature>
<feature type="binding site">
    <location>
        <position position="298"/>
    </location>
    <ligand>
        <name>substrate</name>
    </ligand>
</feature>
<feature type="binding site">
    <location>
        <begin position="360"/>
        <end position="361"/>
    </location>
    <ligand>
        <name>substrate</name>
    </ligand>
</feature>
<feature type="binding site">
    <location>
        <begin position="374"/>
        <end position="375"/>
    </location>
    <ligand>
        <name>substrate</name>
    </ligand>
</feature>
<feature type="binding site">
    <location>
        <begin position="381"/>
        <end position="382"/>
    </location>
    <ligand>
        <name>substrate</name>
    </ligand>
</feature>
<feature type="site" description="Contribution to the catalysis" evidence="1">
    <location>
        <position position="7"/>
    </location>
</feature>
<feature type="site" description="Contribution to the catalysis" evidence="1">
    <location>
        <position position="74"/>
    </location>
</feature>
<feature type="splice variant" id="VSP_018659" description="In isoform Beta." evidence="5">
    <location>
        <begin position="1"/>
        <end position="249"/>
    </location>
</feature>
<feature type="splice variant" id="VSP_018660" description="In isoform Beta." evidence="5">
    <original>V</original>
    <variation>M</variation>
    <location>
        <position position="250"/>
    </location>
</feature>
<feature type="mutagenesis site" description="Change in the inhibitory profile upon addition of threonine." evidence="3">
    <original>G</original>
    <variation>A</variation>
    <location>
        <position position="277"/>
    </location>
</feature>
<feature type="mutagenesis site" description="Absence of inhibition upon addition of threonine and lysine or lysine alone." evidence="3">
    <original>A</original>
    <variation>V</variation>
    <location>
        <position position="279"/>
    </location>
</feature>
<feature type="mutagenesis site" description="Change in the inhibitory profile and absence of dimerization upon addition of threonine." evidence="3">
    <original>Q</original>
    <variation>A</variation>
    <location>
        <position position="298"/>
    </location>
</feature>
<feature type="mutagenesis site" description="Absence of inhibition upon addition of threonine and lysine or lysine alone." evidence="3 4">
    <original>S</original>
    <variation>F</variation>
    <location>
        <position position="301"/>
    </location>
</feature>
<feature type="mutagenesis site" description="Feedback-resistant and enhanced expression of the asd gene." evidence="3 4">
    <original>S</original>
    <variation>Y</variation>
    <location>
        <position position="301"/>
    </location>
</feature>
<feature type="mutagenesis site" description="Change in the inhibitory profile and shows an different oligomer state upon addition of threonine." evidence="3">
    <original>V</original>
    <variation>A</variation>
    <location>
        <position position="360"/>
    </location>
</feature>
<feature type="mutagenesis site" description="Change in the inhibitory profile and absence of dimerization upon addition of threonine." evidence="3">
    <original>T</original>
    <variation>A</variation>
    <location>
        <position position="361"/>
    </location>
</feature>
<feature type="mutagenesis site" description="Change in the inhibitory profile and absence of dimerization upon addition of threonine." evidence="3">
    <original>E</original>
    <variation>A</variation>
    <location>
        <position position="363"/>
    </location>
</feature>
<feature type="mutagenesis site" description="Change in the inhibitory profile and shows an different oligomer state upon addition of threonine." evidence="3">
    <original>F</original>
    <variation>A</variation>
    <location>
        <position position="364"/>
    </location>
</feature>
<feature type="sequence conflict" description="In Ref. 1; CAA40502." evidence="5" ref="1">
    <original>C</original>
    <variation>V</variation>
    <location>
        <position position="40"/>
    </location>
</feature>
<feature type="strand" evidence="8">
    <location>
        <begin position="3"/>
        <end position="8"/>
    </location>
</feature>
<feature type="helix" evidence="8">
    <location>
        <begin position="11"/>
        <end position="13"/>
    </location>
</feature>
<feature type="helix" evidence="8">
    <location>
        <begin position="16"/>
        <end position="31"/>
    </location>
</feature>
<feature type="strand" evidence="8">
    <location>
        <begin position="35"/>
        <end position="40"/>
    </location>
</feature>
<feature type="helix" evidence="8">
    <location>
        <begin position="46"/>
        <end position="57"/>
    </location>
</feature>
<feature type="helix" evidence="8">
    <location>
        <begin position="63"/>
        <end position="87"/>
    </location>
</feature>
<feature type="strand" evidence="8">
    <location>
        <begin position="92"/>
        <end position="94"/>
    </location>
</feature>
<feature type="helix" evidence="8">
    <location>
        <begin position="118"/>
        <end position="126"/>
    </location>
</feature>
<feature type="strand" evidence="8">
    <location>
        <begin position="130"/>
        <end position="134"/>
    </location>
</feature>
<feature type="strand" evidence="7">
    <location>
        <begin position="142"/>
        <end position="150"/>
    </location>
</feature>
<feature type="helix" evidence="8">
    <location>
        <begin position="154"/>
        <end position="165"/>
    </location>
</feature>
<feature type="strand" evidence="8">
    <location>
        <begin position="168"/>
        <end position="175"/>
    </location>
</feature>
<feature type="strand" evidence="8">
    <location>
        <begin position="180"/>
        <end position="182"/>
    </location>
</feature>
<feature type="turn" evidence="8">
    <location>
        <begin position="184"/>
        <end position="186"/>
    </location>
</feature>
<feature type="strand" evidence="8">
    <location>
        <begin position="194"/>
        <end position="196"/>
    </location>
</feature>
<feature type="helix" evidence="8">
    <location>
        <begin position="198"/>
        <end position="206"/>
    </location>
</feature>
<feature type="helix" evidence="8">
    <location>
        <begin position="214"/>
        <end position="222"/>
    </location>
</feature>
<feature type="strand" evidence="8">
    <location>
        <begin position="227"/>
        <end position="234"/>
    </location>
</feature>
<feature type="strand" evidence="8">
    <location>
        <begin position="239"/>
        <end position="241"/>
    </location>
</feature>
<feature type="helix" evidence="8">
    <location>
        <begin position="245"/>
        <end position="247"/>
    </location>
</feature>
<feature type="turn" evidence="8">
    <location>
        <begin position="250"/>
        <end position="252"/>
    </location>
</feature>
<feature type="strand" evidence="6">
    <location>
        <begin position="254"/>
        <end position="261"/>
    </location>
</feature>
<feature type="strand" evidence="6">
    <location>
        <begin position="263"/>
        <end position="273"/>
    </location>
</feature>
<feature type="helix" evidence="6">
    <location>
        <begin position="278"/>
        <end position="288"/>
    </location>
</feature>
<feature type="strand" evidence="6">
    <location>
        <begin position="295"/>
        <end position="298"/>
    </location>
</feature>
<feature type="turn" evidence="6">
    <location>
        <begin position="303"/>
        <end position="305"/>
    </location>
</feature>
<feature type="strand" evidence="6">
    <location>
        <begin position="307"/>
        <end position="315"/>
    </location>
</feature>
<feature type="helix" evidence="6">
    <location>
        <begin position="316"/>
        <end position="318"/>
    </location>
</feature>
<feature type="helix" evidence="6">
    <location>
        <begin position="319"/>
        <end position="327"/>
    </location>
</feature>
<feature type="turn" evidence="6">
    <location>
        <begin position="328"/>
        <end position="334"/>
    </location>
</feature>
<feature type="strand" evidence="6">
    <location>
        <begin position="336"/>
        <end position="342"/>
    </location>
</feature>
<feature type="strand" evidence="6">
    <location>
        <begin position="344"/>
        <end position="352"/>
    </location>
</feature>
<feature type="helix" evidence="6">
    <location>
        <begin position="358"/>
        <end position="370"/>
    </location>
</feature>
<feature type="strand" evidence="6">
    <location>
        <begin position="377"/>
        <end position="381"/>
    </location>
</feature>
<feature type="strand" evidence="6">
    <location>
        <begin position="384"/>
        <end position="390"/>
    </location>
</feature>
<feature type="helix" evidence="6">
    <location>
        <begin position="391"/>
        <end position="393"/>
    </location>
</feature>
<feature type="helix" evidence="6">
    <location>
        <begin position="394"/>
        <end position="405"/>
    </location>
</feature>
<organism>
    <name type="scientific">Corynebacterium glutamicum (strain ATCC 13032 / DSM 20300 / JCM 1318 / BCRC 11384 / CCUG 27702 / LMG 3730 / NBRC 12168 / NCIMB 10025 / NRRL B-2784 / 534)</name>
    <dbReference type="NCBI Taxonomy" id="196627"/>
    <lineage>
        <taxon>Bacteria</taxon>
        <taxon>Bacillati</taxon>
        <taxon>Actinomycetota</taxon>
        <taxon>Actinomycetes</taxon>
        <taxon>Mycobacteriales</taxon>
        <taxon>Corynebacteriaceae</taxon>
        <taxon>Corynebacterium</taxon>
    </lineage>
</organism>